<name>IOLC_MESH7</name>
<protein>
    <recommendedName>
        <fullName evidence="1">5-dehydro-2-deoxygluconokinase</fullName>
        <ecNumber evidence="1">2.7.1.92</ecNumber>
    </recommendedName>
    <alternativeName>
        <fullName evidence="1">2-deoxy-5-keto-D-gluconate kinase</fullName>
        <shortName evidence="1">DKG kinase</shortName>
    </alternativeName>
</protein>
<reference key="1">
    <citation type="journal article" date="2005" name="J. Bacteriol.">
        <title>Swine and poultry pathogens: the complete genome sequences of two strains of Mycoplasma hyopneumoniae and a strain of Mycoplasma synoviae.</title>
        <authorList>
            <person name="Vasconcelos A.T.R."/>
            <person name="Ferreira H.B."/>
            <person name="Bizarro C.V."/>
            <person name="Bonatto S.L."/>
            <person name="Carvalho M.O."/>
            <person name="Pinto P.M."/>
            <person name="Almeida D.F."/>
            <person name="Almeida L.G.P."/>
            <person name="Almeida R."/>
            <person name="Alves-Junior L."/>
            <person name="Assuncao E.N."/>
            <person name="Azevedo V.A.C."/>
            <person name="Bogo M.R."/>
            <person name="Brigido M.M."/>
            <person name="Brocchi M."/>
            <person name="Burity H.A."/>
            <person name="Camargo A.A."/>
            <person name="Camargo S.S."/>
            <person name="Carepo M.S."/>
            <person name="Carraro D.M."/>
            <person name="de Mattos Cascardo J.C."/>
            <person name="Castro L.A."/>
            <person name="Cavalcanti G."/>
            <person name="Chemale G."/>
            <person name="Collevatti R.G."/>
            <person name="Cunha C.W."/>
            <person name="Dallagiovanna B."/>
            <person name="Dambros B.P."/>
            <person name="Dellagostin O.A."/>
            <person name="Falcao C."/>
            <person name="Fantinatti-Garboggini F."/>
            <person name="Felipe M.S.S."/>
            <person name="Fiorentin L."/>
            <person name="Franco G.R."/>
            <person name="Freitas N.S.A."/>
            <person name="Frias D."/>
            <person name="Grangeiro T.B."/>
            <person name="Grisard E.C."/>
            <person name="Guimaraes C.T."/>
            <person name="Hungria M."/>
            <person name="Jardim S.N."/>
            <person name="Krieger M.A."/>
            <person name="Laurino J.P."/>
            <person name="Lima L.F.A."/>
            <person name="Lopes M.I."/>
            <person name="Loreto E.L.S."/>
            <person name="Madeira H.M.F."/>
            <person name="Manfio G.P."/>
            <person name="Maranhao A.Q."/>
            <person name="Martinkovics C.T."/>
            <person name="Medeiros S.R.B."/>
            <person name="Moreira M.A.M."/>
            <person name="Neiva M."/>
            <person name="Ramalho-Neto C.E."/>
            <person name="Nicolas M.F."/>
            <person name="Oliveira S.C."/>
            <person name="Paixao R.F.C."/>
            <person name="Pedrosa F.O."/>
            <person name="Pena S.D.J."/>
            <person name="Pereira M."/>
            <person name="Pereira-Ferrari L."/>
            <person name="Piffer I."/>
            <person name="Pinto L.S."/>
            <person name="Potrich D.P."/>
            <person name="Salim A.C.M."/>
            <person name="Santos F.R."/>
            <person name="Schmitt R."/>
            <person name="Schneider M.P.C."/>
            <person name="Schrank A."/>
            <person name="Schrank I.S."/>
            <person name="Schuck A.F."/>
            <person name="Seuanez H.N."/>
            <person name="Silva D.W."/>
            <person name="Silva R."/>
            <person name="Silva S.C."/>
            <person name="Soares C.M.A."/>
            <person name="Souza K.R.L."/>
            <person name="Souza R.C."/>
            <person name="Staats C.C."/>
            <person name="Steffens M.B.R."/>
            <person name="Teixeira S.M.R."/>
            <person name="Urmenyi T.P."/>
            <person name="Vainstein M.H."/>
            <person name="Zuccherato L.W."/>
            <person name="Simpson A.J.G."/>
            <person name="Zaha A."/>
        </authorList>
    </citation>
    <scope>NUCLEOTIDE SEQUENCE [LARGE SCALE GENOMIC DNA]</scope>
    <source>
        <strain>7448</strain>
    </source>
</reference>
<proteinExistence type="inferred from homology"/>
<feature type="chain" id="PRO_0000352306" description="5-dehydro-2-deoxygluconokinase">
    <location>
        <begin position="1"/>
        <end position="338"/>
    </location>
</feature>
<keyword id="KW-0067">ATP-binding</keyword>
<keyword id="KW-0418">Kinase</keyword>
<keyword id="KW-0547">Nucleotide-binding</keyword>
<keyword id="KW-0808">Transferase</keyword>
<accession>Q4A8D9</accession>
<evidence type="ECO:0000255" key="1">
    <source>
        <dbReference type="HAMAP-Rule" id="MF_01668"/>
    </source>
</evidence>
<dbReference type="EC" id="2.7.1.92" evidence="1"/>
<dbReference type="EMBL" id="AE017244">
    <property type="protein sequence ID" value="AAZ53600.1"/>
    <property type="molecule type" value="Genomic_DNA"/>
</dbReference>
<dbReference type="RefSeq" id="WP_011290090.1">
    <property type="nucleotide sequence ID" value="NC_007332.1"/>
</dbReference>
<dbReference type="SMR" id="Q4A8D9"/>
<dbReference type="KEGG" id="mhp:MHP7448_0226"/>
<dbReference type="HOGENOM" id="CLU_027634_6_0_14"/>
<dbReference type="UniPathway" id="UPA00076">
    <property type="reaction ID" value="UER00146"/>
</dbReference>
<dbReference type="Proteomes" id="UP000000553">
    <property type="component" value="Chromosome"/>
</dbReference>
<dbReference type="GO" id="GO:0047590">
    <property type="term" value="F:5-dehydro-2-deoxygluconokinase activity"/>
    <property type="evidence" value="ECO:0007669"/>
    <property type="project" value="UniProtKB-EC"/>
</dbReference>
<dbReference type="GO" id="GO:0005524">
    <property type="term" value="F:ATP binding"/>
    <property type="evidence" value="ECO:0007669"/>
    <property type="project" value="UniProtKB-KW"/>
</dbReference>
<dbReference type="CDD" id="cd01166">
    <property type="entry name" value="KdgK"/>
    <property type="match status" value="1"/>
</dbReference>
<dbReference type="Gene3D" id="3.40.1190.20">
    <property type="match status" value="1"/>
</dbReference>
<dbReference type="Gene3D" id="2.20.150.10">
    <property type="entry name" value="putative 5-dehydro-2- deoxygluconokinase"/>
    <property type="match status" value="1"/>
</dbReference>
<dbReference type="HAMAP" id="MF_01668">
    <property type="entry name" value="IolC"/>
    <property type="match status" value="1"/>
</dbReference>
<dbReference type="InterPro" id="IPR022841">
    <property type="entry name" value="DKG_kinase_firmi"/>
</dbReference>
<dbReference type="InterPro" id="IPR030830">
    <property type="entry name" value="Myo_inos_IolC"/>
</dbReference>
<dbReference type="InterPro" id="IPR023314">
    <property type="entry name" value="Myo_inos_IolC-like_sf"/>
</dbReference>
<dbReference type="InterPro" id="IPR050306">
    <property type="entry name" value="PfkB_Carbo_kinase"/>
</dbReference>
<dbReference type="InterPro" id="IPR011611">
    <property type="entry name" value="PfkB_dom"/>
</dbReference>
<dbReference type="InterPro" id="IPR029056">
    <property type="entry name" value="Ribokinase-like"/>
</dbReference>
<dbReference type="NCBIfam" id="TIGR04382">
    <property type="entry name" value="myo_inos_iolC_N"/>
    <property type="match status" value="1"/>
</dbReference>
<dbReference type="PANTHER" id="PTHR43085:SF49">
    <property type="entry name" value="5-DEHYDRO-2-DEOXYGLUCONOKINASE"/>
    <property type="match status" value="1"/>
</dbReference>
<dbReference type="PANTHER" id="PTHR43085">
    <property type="entry name" value="HEXOKINASE FAMILY MEMBER"/>
    <property type="match status" value="1"/>
</dbReference>
<dbReference type="Pfam" id="PF00294">
    <property type="entry name" value="PfkB"/>
    <property type="match status" value="1"/>
</dbReference>
<dbReference type="SUPFAM" id="SSF53613">
    <property type="entry name" value="Ribokinase-like"/>
    <property type="match status" value="1"/>
</dbReference>
<sequence>MKKEFDFILIGRITIDFNPTDYYNNLENSSLFKKYIGGSAANIAIGLSRLKNKVGFFGSVSDDQFGNFVLNVFENEKIDISHIKKTKDHKLGLTFTEMLSEEKSTILMYRDNVADLQIDVSDIDLDYILRTKILVISGTSLAKSPSREAVLKALFLAKNNGIKVVFDIDYRPYSWKNLDEVSLYYQIVAQNSDLIIGSYEEIQLTSRFCLENPENLIDDDYAKYWLKFVDLIIIKNGKKGSKLYQKDKKLVAKIVPVKMLKGYGGGDAYASLFLDHYLKNESDLENGLALATSAASIMVQSHSSFDLPDYQKILEFKDNALKSDPDLVQKKEWNAFKK</sequence>
<comment type="function">
    <text evidence="1">Catalyzes the phosphorylation of 5-dehydro-2-deoxy-D-gluconate (2-deoxy-5-keto-D-gluconate or DKG) to 6-phospho-5-dehydro-2-deoxy-D-gluconate (DKGP).</text>
</comment>
<comment type="catalytic activity">
    <reaction evidence="1">
        <text>5-dehydro-2-deoxy-D-gluconate + ATP = 6-phospho-5-dehydro-2-deoxy-D-gluconate + ADP + H(+)</text>
        <dbReference type="Rhea" id="RHEA:13497"/>
        <dbReference type="ChEBI" id="CHEBI:15378"/>
        <dbReference type="ChEBI" id="CHEBI:16669"/>
        <dbReference type="ChEBI" id="CHEBI:30616"/>
        <dbReference type="ChEBI" id="CHEBI:57949"/>
        <dbReference type="ChEBI" id="CHEBI:456216"/>
        <dbReference type="EC" id="2.7.1.92"/>
    </reaction>
</comment>
<comment type="pathway">
    <text evidence="1">Polyol metabolism; myo-inositol degradation into acetyl-CoA; acetyl-CoA from myo-inositol: step 5/7.</text>
</comment>
<comment type="similarity">
    <text evidence="1">Belongs to the carbohydrate kinase PfkB family.</text>
</comment>
<gene>
    <name evidence="1" type="primary">iolC</name>
    <name type="ordered locus">MHP7448_0226</name>
</gene>
<organism>
    <name type="scientific">Mesomycoplasma hyopneumoniae (strain 7448)</name>
    <name type="common">Mycoplasma hyopneumoniae</name>
    <dbReference type="NCBI Taxonomy" id="262722"/>
    <lineage>
        <taxon>Bacteria</taxon>
        <taxon>Bacillati</taxon>
        <taxon>Mycoplasmatota</taxon>
        <taxon>Mycoplasmoidales</taxon>
        <taxon>Metamycoplasmataceae</taxon>
        <taxon>Mesomycoplasma</taxon>
    </lineage>
</organism>